<reference key="1">
    <citation type="journal article" date="2008" name="J. Bacteriol.">
        <title>The complete genome sequence of Actinobacillus pleuropneumoniae L20 (serotype 5b).</title>
        <authorList>
            <person name="Foote S.J."/>
            <person name="Bosse J.T."/>
            <person name="Bouevitch A.B."/>
            <person name="Langford P.R."/>
            <person name="Young N.M."/>
            <person name="Nash J.H.E."/>
        </authorList>
    </citation>
    <scope>NUCLEOTIDE SEQUENCE [LARGE SCALE GENOMIC DNA]</scope>
    <source>
        <strain>L20</strain>
    </source>
</reference>
<organism>
    <name type="scientific">Actinobacillus pleuropneumoniae serotype 5b (strain L20)</name>
    <dbReference type="NCBI Taxonomy" id="416269"/>
    <lineage>
        <taxon>Bacteria</taxon>
        <taxon>Pseudomonadati</taxon>
        <taxon>Pseudomonadota</taxon>
        <taxon>Gammaproteobacteria</taxon>
        <taxon>Pasteurellales</taxon>
        <taxon>Pasteurellaceae</taxon>
        <taxon>Actinobacillus</taxon>
    </lineage>
</organism>
<name>HLDE_ACTP2</name>
<comment type="function">
    <text evidence="1">Catalyzes the phosphorylation of D-glycero-D-manno-heptose 7-phosphate at the C-1 position to selectively form D-glycero-beta-D-manno-heptose-1,7-bisphosphate.</text>
</comment>
<comment type="function">
    <text evidence="1">Catalyzes the ADP transfer from ATP to D-glycero-beta-D-manno-heptose 1-phosphate, yielding ADP-D-glycero-beta-D-manno-heptose.</text>
</comment>
<comment type="catalytic activity">
    <reaction evidence="1">
        <text>D-glycero-beta-D-manno-heptose 7-phosphate + ATP = D-glycero-beta-D-manno-heptose 1,7-bisphosphate + ADP + H(+)</text>
        <dbReference type="Rhea" id="RHEA:27473"/>
        <dbReference type="ChEBI" id="CHEBI:15378"/>
        <dbReference type="ChEBI" id="CHEBI:30616"/>
        <dbReference type="ChEBI" id="CHEBI:60204"/>
        <dbReference type="ChEBI" id="CHEBI:60208"/>
        <dbReference type="ChEBI" id="CHEBI:456216"/>
        <dbReference type="EC" id="2.7.1.167"/>
    </reaction>
</comment>
<comment type="catalytic activity">
    <reaction evidence="1">
        <text>D-glycero-beta-D-manno-heptose 1-phosphate + ATP + H(+) = ADP-D-glycero-beta-D-manno-heptose + diphosphate</text>
        <dbReference type="Rhea" id="RHEA:27465"/>
        <dbReference type="ChEBI" id="CHEBI:15378"/>
        <dbReference type="ChEBI" id="CHEBI:30616"/>
        <dbReference type="ChEBI" id="CHEBI:33019"/>
        <dbReference type="ChEBI" id="CHEBI:59967"/>
        <dbReference type="ChEBI" id="CHEBI:61593"/>
        <dbReference type="EC" id="2.7.7.70"/>
    </reaction>
</comment>
<comment type="pathway">
    <text evidence="1">Nucleotide-sugar biosynthesis; ADP-L-glycero-beta-D-manno-heptose biosynthesis; ADP-L-glycero-beta-D-manno-heptose from D-glycero-beta-D-manno-heptose 7-phosphate: step 1/4.</text>
</comment>
<comment type="pathway">
    <text evidence="1">Nucleotide-sugar biosynthesis; ADP-L-glycero-beta-D-manno-heptose biosynthesis; ADP-L-glycero-beta-D-manno-heptose from D-glycero-beta-D-manno-heptose 7-phosphate: step 3/4.</text>
</comment>
<comment type="subunit">
    <text evidence="1">Homodimer.</text>
</comment>
<comment type="similarity">
    <text evidence="1">In the N-terminal section; belongs to the carbohydrate kinase PfkB family.</text>
</comment>
<comment type="similarity">
    <text evidence="1">In the C-terminal section; belongs to the cytidylyltransferase family.</text>
</comment>
<comment type="sequence caution" evidence="2">
    <conflict type="erroneous initiation">
        <sequence resource="EMBL-CDS" id="ABN73506"/>
    </conflict>
</comment>
<dbReference type="EC" id="2.7.1.167" evidence="1"/>
<dbReference type="EC" id="2.7.7.70" evidence="1"/>
<dbReference type="EMBL" id="CP000569">
    <property type="protein sequence ID" value="ABN73506.1"/>
    <property type="status" value="ALT_INIT"/>
    <property type="molecule type" value="Genomic_DNA"/>
</dbReference>
<dbReference type="SMR" id="A3MZC0"/>
<dbReference type="STRING" id="416269.APL_0402"/>
<dbReference type="EnsemblBacteria" id="ABN73506">
    <property type="protein sequence ID" value="ABN73506"/>
    <property type="gene ID" value="APL_0402"/>
</dbReference>
<dbReference type="KEGG" id="apl:APL_0402"/>
<dbReference type="eggNOG" id="COG0615">
    <property type="taxonomic scope" value="Bacteria"/>
</dbReference>
<dbReference type="eggNOG" id="COG2870">
    <property type="taxonomic scope" value="Bacteria"/>
</dbReference>
<dbReference type="HOGENOM" id="CLU_021150_2_1_6"/>
<dbReference type="UniPathway" id="UPA00356">
    <property type="reaction ID" value="UER00437"/>
</dbReference>
<dbReference type="UniPathway" id="UPA00356">
    <property type="reaction ID" value="UER00439"/>
</dbReference>
<dbReference type="Proteomes" id="UP000001432">
    <property type="component" value="Chromosome"/>
</dbReference>
<dbReference type="GO" id="GO:0005829">
    <property type="term" value="C:cytosol"/>
    <property type="evidence" value="ECO:0007669"/>
    <property type="project" value="TreeGrafter"/>
</dbReference>
<dbReference type="GO" id="GO:0005524">
    <property type="term" value="F:ATP binding"/>
    <property type="evidence" value="ECO:0007669"/>
    <property type="project" value="UniProtKB-UniRule"/>
</dbReference>
<dbReference type="GO" id="GO:0033785">
    <property type="term" value="F:heptose 7-phosphate kinase activity"/>
    <property type="evidence" value="ECO:0007669"/>
    <property type="project" value="UniProtKB-UniRule"/>
</dbReference>
<dbReference type="GO" id="GO:0033786">
    <property type="term" value="F:heptose-1-phosphate adenylyltransferase activity"/>
    <property type="evidence" value="ECO:0007669"/>
    <property type="project" value="UniProtKB-UniRule"/>
</dbReference>
<dbReference type="GO" id="GO:0016773">
    <property type="term" value="F:phosphotransferase activity, alcohol group as acceptor"/>
    <property type="evidence" value="ECO:0007669"/>
    <property type="project" value="InterPro"/>
</dbReference>
<dbReference type="GO" id="GO:0097171">
    <property type="term" value="P:ADP-L-glycero-beta-D-manno-heptose biosynthetic process"/>
    <property type="evidence" value="ECO:0007669"/>
    <property type="project" value="UniProtKB-UniPathway"/>
</dbReference>
<dbReference type="CDD" id="cd01172">
    <property type="entry name" value="RfaE_like"/>
    <property type="match status" value="1"/>
</dbReference>
<dbReference type="FunFam" id="3.40.1190.20:FF:000002">
    <property type="entry name" value="Bifunctional protein HldE"/>
    <property type="match status" value="1"/>
</dbReference>
<dbReference type="FunFam" id="3.40.50.620:FF:000028">
    <property type="entry name" value="Bifunctional protein HldE"/>
    <property type="match status" value="1"/>
</dbReference>
<dbReference type="Gene3D" id="3.40.1190.20">
    <property type="match status" value="1"/>
</dbReference>
<dbReference type="Gene3D" id="3.40.50.620">
    <property type="entry name" value="HUPs"/>
    <property type="match status" value="1"/>
</dbReference>
<dbReference type="HAMAP" id="MF_01603">
    <property type="entry name" value="HldE"/>
    <property type="match status" value="1"/>
</dbReference>
<dbReference type="InterPro" id="IPR023030">
    <property type="entry name" value="Bifunc_HldE"/>
</dbReference>
<dbReference type="InterPro" id="IPR002173">
    <property type="entry name" value="Carboh/pur_kinase_PfkB_CS"/>
</dbReference>
<dbReference type="InterPro" id="IPR004821">
    <property type="entry name" value="Cyt_trans-like"/>
</dbReference>
<dbReference type="InterPro" id="IPR011611">
    <property type="entry name" value="PfkB_dom"/>
</dbReference>
<dbReference type="InterPro" id="IPR011913">
    <property type="entry name" value="RfaE_dom_I"/>
</dbReference>
<dbReference type="InterPro" id="IPR011914">
    <property type="entry name" value="RfaE_dom_II"/>
</dbReference>
<dbReference type="InterPro" id="IPR029056">
    <property type="entry name" value="Ribokinase-like"/>
</dbReference>
<dbReference type="InterPro" id="IPR014729">
    <property type="entry name" value="Rossmann-like_a/b/a_fold"/>
</dbReference>
<dbReference type="NCBIfam" id="TIGR00125">
    <property type="entry name" value="cyt_tran_rel"/>
    <property type="match status" value="1"/>
</dbReference>
<dbReference type="NCBIfam" id="NF008454">
    <property type="entry name" value="PRK11316.1"/>
    <property type="match status" value="1"/>
</dbReference>
<dbReference type="NCBIfam" id="TIGR02198">
    <property type="entry name" value="rfaE_dom_I"/>
    <property type="match status" value="1"/>
</dbReference>
<dbReference type="NCBIfam" id="TIGR02199">
    <property type="entry name" value="rfaE_dom_II"/>
    <property type="match status" value="1"/>
</dbReference>
<dbReference type="PANTHER" id="PTHR46969">
    <property type="entry name" value="BIFUNCTIONAL PROTEIN HLDE"/>
    <property type="match status" value="1"/>
</dbReference>
<dbReference type="PANTHER" id="PTHR46969:SF1">
    <property type="entry name" value="BIFUNCTIONAL PROTEIN HLDE"/>
    <property type="match status" value="1"/>
</dbReference>
<dbReference type="Pfam" id="PF01467">
    <property type="entry name" value="CTP_transf_like"/>
    <property type="match status" value="1"/>
</dbReference>
<dbReference type="Pfam" id="PF00294">
    <property type="entry name" value="PfkB"/>
    <property type="match status" value="1"/>
</dbReference>
<dbReference type="SUPFAM" id="SSF52374">
    <property type="entry name" value="Nucleotidylyl transferase"/>
    <property type="match status" value="1"/>
</dbReference>
<dbReference type="SUPFAM" id="SSF53613">
    <property type="entry name" value="Ribokinase-like"/>
    <property type="match status" value="1"/>
</dbReference>
<dbReference type="PROSITE" id="PS00583">
    <property type="entry name" value="PFKB_KINASES_1"/>
    <property type="match status" value="1"/>
</dbReference>
<gene>
    <name evidence="1" type="primary">hldE</name>
    <name type="ordered locus">APL_0402</name>
</gene>
<sequence>MMQYSPKFNNAKVLVLGDVMLDRYWFGATNRISPEAPVPVVKVQDIEERAGGAANVAMNIASLSVPVALHGLIGQDDAGRALDKLLNSHNIQNHCVALDSHPTITKLRILSRHQQLLRLDFEEGFHHVASDSLLAKLEQEITAYGALILSDYGKGTLESVQQMIQVARKAGVPTLIDPKGTDFERYRGATLLTPNMSEFEAVVGHCKDDDEIVEKGLKLIADFELTALLVTRSEKGMTLLRPNQAPFHLPTQAKEVYDVTGAGDTVISVLATAIADGRPYEEACYLANAAAGVVVGKLGTSTVTPTELENAIHHREETGFGILAEDELKRAVEQAKQRGEKIVMTNGCFDILHPGHVSYLENARKLGDRLIVAVNTDESVKRLKGESRPINDLNARMAVLAGLASVDWVVPFAEDTPQRLIGEILPNLLVKGGDYKPEEIAGSQEVWANGGEVKVLNFENGCSTTNVIKKIQASK</sequence>
<proteinExistence type="inferred from homology"/>
<accession>A3MZC0</accession>
<keyword id="KW-0067">ATP-binding</keyword>
<keyword id="KW-0119">Carbohydrate metabolism</keyword>
<keyword id="KW-0418">Kinase</keyword>
<keyword id="KW-0511">Multifunctional enzyme</keyword>
<keyword id="KW-0547">Nucleotide-binding</keyword>
<keyword id="KW-0548">Nucleotidyltransferase</keyword>
<keyword id="KW-1185">Reference proteome</keyword>
<keyword id="KW-0808">Transferase</keyword>
<protein>
    <recommendedName>
        <fullName evidence="1">Bifunctional protein HldE</fullName>
    </recommendedName>
    <domain>
        <recommendedName>
            <fullName evidence="1">D-beta-D-heptose 7-phosphate kinase</fullName>
            <ecNumber evidence="1">2.7.1.167</ecNumber>
        </recommendedName>
        <alternativeName>
            <fullName evidence="1">D-beta-D-heptose 7-phosphotransferase</fullName>
        </alternativeName>
        <alternativeName>
            <fullName evidence="1">D-glycero-beta-D-manno-heptose-7-phosphate kinase</fullName>
        </alternativeName>
    </domain>
    <domain>
        <recommendedName>
            <fullName evidence="1">D-beta-D-heptose 1-phosphate adenylyltransferase</fullName>
            <ecNumber evidence="1">2.7.7.70</ecNumber>
        </recommendedName>
        <alternativeName>
            <fullName evidence="1">D-glycero-beta-D-manno-heptose 1-phosphate adenylyltransferase</fullName>
        </alternativeName>
    </domain>
</protein>
<evidence type="ECO:0000255" key="1">
    <source>
        <dbReference type="HAMAP-Rule" id="MF_01603"/>
    </source>
</evidence>
<evidence type="ECO:0000305" key="2"/>
<feature type="chain" id="PRO_0000291666" description="Bifunctional protein HldE">
    <location>
        <begin position="1"/>
        <end position="475"/>
    </location>
</feature>
<feature type="region of interest" description="Ribokinase">
    <location>
        <begin position="1"/>
        <end position="318"/>
    </location>
</feature>
<feature type="region of interest" description="Cytidylyltransferase">
    <location>
        <begin position="344"/>
        <end position="475"/>
    </location>
</feature>
<feature type="active site" evidence="1">
    <location>
        <position position="264"/>
    </location>
</feature>
<feature type="binding site" evidence="1">
    <location>
        <begin position="195"/>
        <end position="198"/>
    </location>
    <ligand>
        <name>ATP</name>
        <dbReference type="ChEBI" id="CHEBI:30616"/>
    </ligand>
</feature>